<evidence type="ECO:0000250" key="1"/>
<name>MST3_DROHY</name>
<protein>
    <recommendedName>
        <fullName>Axoneme-associated protein mst101(3)</fullName>
    </recommendedName>
</protein>
<proteinExistence type="evidence at transcript level"/>
<keyword id="KW-0963">Cytoplasm</keyword>
<keyword id="KW-0677">Repeat</keyword>
<reference key="1">
    <citation type="journal article" date="1999" name="Dev. Growth Differ.">
        <title>Proteins with tandemly arranged repeats of a highly charged 16-amino-acid motif encoded by the Dhmst101 gene family are structural components of the outer sheath of the extremely elongated sperm tails of Drosophila hydei.</title>
        <authorList>
            <person name="Neesen J."/>
            <person name="Heinlein U.A.O."/>
            <person name="Heinz Glatzer K."/>
            <person name="Buenemann H."/>
        </authorList>
    </citation>
    <scope>NUCLEOTIDE SEQUENCE [GENOMIC DNA]</scope>
</reference>
<feature type="chain" id="PRO_0000096606" description="Axoneme-associated protein mst101(3)">
    <location>
        <begin position="1"/>
        <end position="275"/>
    </location>
</feature>
<feature type="repeat" description="1">
    <location>
        <begin position="64"/>
        <end position="79"/>
    </location>
</feature>
<feature type="repeat" description="2">
    <location>
        <begin position="80"/>
        <end position="95"/>
    </location>
</feature>
<feature type="repeat" description="3">
    <location>
        <begin position="96"/>
        <end position="111"/>
    </location>
</feature>
<feature type="repeat" description="4">
    <location>
        <begin position="112"/>
        <end position="127"/>
    </location>
</feature>
<feature type="repeat" description="5">
    <location>
        <begin position="128"/>
        <end position="143"/>
    </location>
</feature>
<feature type="repeat" description="6">
    <location>
        <begin position="144"/>
        <end position="159"/>
    </location>
</feature>
<feature type="repeat" description="7">
    <location>
        <begin position="160"/>
        <end position="175"/>
    </location>
</feature>
<feature type="repeat" description="8">
    <location>
        <begin position="181"/>
        <end position="196"/>
    </location>
</feature>
<feature type="repeat" description="9">
    <location>
        <begin position="197"/>
        <end position="212"/>
    </location>
</feature>
<feature type="repeat" description="10">
    <location>
        <begin position="215"/>
        <end position="230"/>
    </location>
</feature>
<feature type="repeat" description="11">
    <location>
        <begin position="231"/>
        <end position="246"/>
    </location>
</feature>
<feature type="repeat" description="12">
    <location>
        <begin position="249"/>
        <end position="264"/>
    </location>
</feature>
<feature type="region of interest" description="12 X 16 AA tandem repeats of [KRA]-K-[KEM]-[CKA]-[AEKD]-[EA]-[ALE]-[AMK]-[FKAML]-[KQA]-[EQKA]-[KQCEM]-[ECLA]-[AEQ]-[AEQ]-[EQAKV]">
    <location>
        <begin position="64"/>
        <end position="264"/>
    </location>
</feature>
<gene>
    <name type="primary">mst101(3)</name>
    <name type="synonym">DHMST101</name>
</gene>
<dbReference type="EMBL" id="U85627">
    <property type="protein sequence ID" value="AAB51369.1"/>
    <property type="molecule type" value="Genomic_DNA"/>
</dbReference>
<dbReference type="EnsemblMetazoa" id="XM_023309251.2">
    <property type="protein sequence ID" value="XP_023165019.1"/>
    <property type="gene ID" value="LOC111595481"/>
</dbReference>
<dbReference type="Proteomes" id="UP000504633">
    <property type="component" value="Unplaced"/>
</dbReference>
<dbReference type="GO" id="GO:0005737">
    <property type="term" value="C:cytoplasm"/>
    <property type="evidence" value="ECO:0007669"/>
    <property type="project" value="UniProtKB-SubCell"/>
</dbReference>
<dbReference type="GO" id="GO:0007291">
    <property type="term" value="P:sperm individualization"/>
    <property type="evidence" value="ECO:0000270"/>
    <property type="project" value="UniProtKB"/>
</dbReference>
<organism>
    <name type="scientific">Drosophila hydei</name>
    <name type="common">Fruit fly</name>
    <dbReference type="NCBI Taxonomy" id="7224"/>
    <lineage>
        <taxon>Eukaryota</taxon>
        <taxon>Metazoa</taxon>
        <taxon>Ecdysozoa</taxon>
        <taxon>Arthropoda</taxon>
        <taxon>Hexapoda</taxon>
        <taxon>Insecta</taxon>
        <taxon>Pterygota</taxon>
        <taxon>Neoptera</taxon>
        <taxon>Endopterygota</taxon>
        <taxon>Diptera</taxon>
        <taxon>Brachycera</taxon>
        <taxon>Muscomorpha</taxon>
        <taxon>Ephydroidea</taxon>
        <taxon>Drosophilidae</taxon>
        <taxon>Drosophila</taxon>
    </lineage>
</organism>
<sequence length="275" mass="30437">MLLSRFTSVFPRNVIVRGVSTLTSHVDRNYLVRSSFDKCQRFPFSDSKQEAEDVKKKCEEAAAKKKCAEAAKKEKEAAEKKKCAEAAKKEKEAAEKKKCAEAAKKEQEAAQKKKCAELAKKEKEAAEKKKCAEAAKKEKEAAERKKCEEAAFKQKCEEAAKKKKEAKKAAELQQKCAALAKKEKEAEMMKKCEEAAKKKAAEEAAKKKAEEVAAKKKADEAAAKKKCAEAKKKAEEAALKKMCEEAALKKMCEEAALQKKCAEAAKNAKKTDSET</sequence>
<accession>O01395</accession>
<comment type="function">
    <text evidence="1">Possible structural role in the sperm tail.</text>
</comment>
<comment type="subcellular location">
    <subcellularLocation>
        <location evidence="1">Cytoplasm</location>
    </subcellularLocation>
</comment>
<comment type="tissue specificity">
    <text>Testis.</text>
</comment>